<keyword id="KW-0028">Amino-acid biosynthesis</keyword>
<keyword id="KW-0963">Cytoplasm</keyword>
<keyword id="KW-0368">Histidine biosynthesis</keyword>
<keyword id="KW-0456">Lyase</keyword>
<accession>A8FHQ9</accession>
<name>HIS6_BACP2</name>
<dbReference type="EC" id="4.3.2.10" evidence="1"/>
<dbReference type="EMBL" id="CP000813">
    <property type="protein sequence ID" value="ABV63776.1"/>
    <property type="molecule type" value="Genomic_DNA"/>
</dbReference>
<dbReference type="RefSeq" id="WP_012011365.1">
    <property type="nucleotide sequence ID" value="NZ_VEIS01000009.1"/>
</dbReference>
<dbReference type="SMR" id="A8FHQ9"/>
<dbReference type="STRING" id="315750.BPUM_3122"/>
<dbReference type="GeneID" id="5622412"/>
<dbReference type="KEGG" id="bpu:BPUM_3122"/>
<dbReference type="eggNOG" id="COG0107">
    <property type="taxonomic scope" value="Bacteria"/>
</dbReference>
<dbReference type="HOGENOM" id="CLU_048577_4_0_9"/>
<dbReference type="OrthoDB" id="9781903at2"/>
<dbReference type="UniPathway" id="UPA00031">
    <property type="reaction ID" value="UER00010"/>
</dbReference>
<dbReference type="Proteomes" id="UP000001355">
    <property type="component" value="Chromosome"/>
</dbReference>
<dbReference type="GO" id="GO:0005737">
    <property type="term" value="C:cytoplasm"/>
    <property type="evidence" value="ECO:0007669"/>
    <property type="project" value="UniProtKB-SubCell"/>
</dbReference>
<dbReference type="GO" id="GO:0000107">
    <property type="term" value="F:imidazoleglycerol-phosphate synthase activity"/>
    <property type="evidence" value="ECO:0007669"/>
    <property type="project" value="UniProtKB-UniRule"/>
</dbReference>
<dbReference type="GO" id="GO:0016829">
    <property type="term" value="F:lyase activity"/>
    <property type="evidence" value="ECO:0007669"/>
    <property type="project" value="UniProtKB-KW"/>
</dbReference>
<dbReference type="GO" id="GO:0000105">
    <property type="term" value="P:L-histidine biosynthetic process"/>
    <property type="evidence" value="ECO:0007669"/>
    <property type="project" value="UniProtKB-UniRule"/>
</dbReference>
<dbReference type="CDD" id="cd04731">
    <property type="entry name" value="HisF"/>
    <property type="match status" value="1"/>
</dbReference>
<dbReference type="FunFam" id="3.20.20.70:FF:000006">
    <property type="entry name" value="Imidazole glycerol phosphate synthase subunit HisF"/>
    <property type="match status" value="1"/>
</dbReference>
<dbReference type="Gene3D" id="3.20.20.70">
    <property type="entry name" value="Aldolase class I"/>
    <property type="match status" value="1"/>
</dbReference>
<dbReference type="HAMAP" id="MF_01013">
    <property type="entry name" value="HisF"/>
    <property type="match status" value="1"/>
</dbReference>
<dbReference type="InterPro" id="IPR013785">
    <property type="entry name" value="Aldolase_TIM"/>
</dbReference>
<dbReference type="InterPro" id="IPR006062">
    <property type="entry name" value="His_biosynth"/>
</dbReference>
<dbReference type="InterPro" id="IPR004651">
    <property type="entry name" value="HisF"/>
</dbReference>
<dbReference type="InterPro" id="IPR050064">
    <property type="entry name" value="IGPS_HisA/HisF"/>
</dbReference>
<dbReference type="InterPro" id="IPR011060">
    <property type="entry name" value="RibuloseP-bd_barrel"/>
</dbReference>
<dbReference type="NCBIfam" id="TIGR00735">
    <property type="entry name" value="hisF"/>
    <property type="match status" value="1"/>
</dbReference>
<dbReference type="PANTHER" id="PTHR21235:SF2">
    <property type="entry name" value="IMIDAZOLE GLYCEROL PHOSPHATE SYNTHASE HISHF"/>
    <property type="match status" value="1"/>
</dbReference>
<dbReference type="PANTHER" id="PTHR21235">
    <property type="entry name" value="IMIDAZOLE GLYCEROL PHOSPHATE SYNTHASE SUBUNIT HISF/H IGP SYNTHASE SUBUNIT HISF/H"/>
    <property type="match status" value="1"/>
</dbReference>
<dbReference type="Pfam" id="PF00977">
    <property type="entry name" value="His_biosynth"/>
    <property type="match status" value="1"/>
</dbReference>
<dbReference type="SUPFAM" id="SSF51366">
    <property type="entry name" value="Ribulose-phoshate binding barrel"/>
    <property type="match status" value="1"/>
</dbReference>
<evidence type="ECO:0000255" key="1">
    <source>
        <dbReference type="HAMAP-Rule" id="MF_01013"/>
    </source>
</evidence>
<protein>
    <recommendedName>
        <fullName evidence="1">Imidazole glycerol phosphate synthase subunit HisF</fullName>
        <ecNumber evidence="1">4.3.2.10</ecNumber>
    </recommendedName>
    <alternativeName>
        <fullName evidence="1">IGP synthase cyclase subunit</fullName>
    </alternativeName>
    <alternativeName>
        <fullName evidence="1">IGP synthase subunit HisF</fullName>
    </alternativeName>
    <alternativeName>
        <fullName evidence="1">ImGP synthase subunit HisF</fullName>
        <shortName evidence="1">IGPS subunit HisF</shortName>
    </alternativeName>
</protein>
<feature type="chain" id="PRO_1000063027" description="Imidazole glycerol phosphate synthase subunit HisF">
    <location>
        <begin position="1"/>
        <end position="252"/>
    </location>
</feature>
<feature type="active site" evidence="1">
    <location>
        <position position="11"/>
    </location>
</feature>
<feature type="active site" evidence="1">
    <location>
        <position position="130"/>
    </location>
</feature>
<comment type="function">
    <text evidence="1">IGPS catalyzes the conversion of PRFAR and glutamine to IGP, AICAR and glutamate. The HisF subunit catalyzes the cyclization activity that produces IGP and AICAR from PRFAR using the ammonia provided by the HisH subunit.</text>
</comment>
<comment type="catalytic activity">
    <reaction evidence="1">
        <text>5-[(5-phospho-1-deoxy-D-ribulos-1-ylimino)methylamino]-1-(5-phospho-beta-D-ribosyl)imidazole-4-carboxamide + L-glutamine = D-erythro-1-(imidazol-4-yl)glycerol 3-phosphate + 5-amino-1-(5-phospho-beta-D-ribosyl)imidazole-4-carboxamide + L-glutamate + H(+)</text>
        <dbReference type="Rhea" id="RHEA:24793"/>
        <dbReference type="ChEBI" id="CHEBI:15378"/>
        <dbReference type="ChEBI" id="CHEBI:29985"/>
        <dbReference type="ChEBI" id="CHEBI:58278"/>
        <dbReference type="ChEBI" id="CHEBI:58359"/>
        <dbReference type="ChEBI" id="CHEBI:58475"/>
        <dbReference type="ChEBI" id="CHEBI:58525"/>
        <dbReference type="EC" id="4.3.2.10"/>
    </reaction>
</comment>
<comment type="pathway">
    <text evidence="1">Amino-acid biosynthesis; L-histidine biosynthesis; L-histidine from 5-phospho-alpha-D-ribose 1-diphosphate: step 5/9.</text>
</comment>
<comment type="subunit">
    <text evidence="1">Heterodimer of HisH and HisF.</text>
</comment>
<comment type="subcellular location">
    <subcellularLocation>
        <location evidence="1">Cytoplasm</location>
    </subcellularLocation>
</comment>
<comment type="similarity">
    <text evidence="1">Belongs to the HisA/HisF family.</text>
</comment>
<proteinExistence type="inferred from homology"/>
<sequence length="252" mass="27291">MMTKRIIPCLDVKEGRVVKGVQFLGLKDAGDPVELAQIYDEEGADELVFLDISASHEGRKTMVDVVKQVASTLAIPFTVGGGINHLDDMKRILRAGADKVSVNTAAVLRPELISEGADFFGSQCIVVAIDAKYVEEKKAYMVYTHGGRRQTDIEVSDWAKEAVLRGAGEILLTSMDADGEKKGFDHRLTKLVSEAVTVPVIASGGAGNAQHMLEAFTKGEADAALAASIFHYKETSIQEVKTYLKEHGVKVR</sequence>
<organism>
    <name type="scientific">Bacillus pumilus (strain SAFR-032)</name>
    <dbReference type="NCBI Taxonomy" id="315750"/>
    <lineage>
        <taxon>Bacteria</taxon>
        <taxon>Bacillati</taxon>
        <taxon>Bacillota</taxon>
        <taxon>Bacilli</taxon>
        <taxon>Bacillales</taxon>
        <taxon>Bacillaceae</taxon>
        <taxon>Bacillus</taxon>
    </lineage>
</organism>
<reference key="1">
    <citation type="journal article" date="2007" name="PLoS ONE">
        <title>Paradoxical DNA repair and peroxide resistance gene conservation in Bacillus pumilus SAFR-032.</title>
        <authorList>
            <person name="Gioia J."/>
            <person name="Yerrapragada S."/>
            <person name="Qin X."/>
            <person name="Jiang H."/>
            <person name="Igboeli O.C."/>
            <person name="Muzny D."/>
            <person name="Dugan-Rocha S."/>
            <person name="Ding Y."/>
            <person name="Hawes A."/>
            <person name="Liu W."/>
            <person name="Perez L."/>
            <person name="Kovar C."/>
            <person name="Dinh H."/>
            <person name="Lee S."/>
            <person name="Nazareth L."/>
            <person name="Blyth P."/>
            <person name="Holder M."/>
            <person name="Buhay C."/>
            <person name="Tirumalai M.R."/>
            <person name="Liu Y."/>
            <person name="Dasgupta I."/>
            <person name="Bokhetache L."/>
            <person name="Fujita M."/>
            <person name="Karouia F."/>
            <person name="Eswara Moorthy P."/>
            <person name="Siefert J."/>
            <person name="Uzman A."/>
            <person name="Buzumbo P."/>
            <person name="Verma A."/>
            <person name="Zwiya H."/>
            <person name="McWilliams B.D."/>
            <person name="Olowu A."/>
            <person name="Clinkenbeard K.D."/>
            <person name="Newcombe D."/>
            <person name="Golebiewski L."/>
            <person name="Petrosino J.F."/>
            <person name="Nicholson W.L."/>
            <person name="Fox G.E."/>
            <person name="Venkateswaran K."/>
            <person name="Highlander S.K."/>
            <person name="Weinstock G.M."/>
        </authorList>
    </citation>
    <scope>NUCLEOTIDE SEQUENCE [LARGE SCALE GENOMIC DNA]</scope>
    <source>
        <strain>SAFR-032</strain>
    </source>
</reference>
<gene>
    <name evidence="1" type="primary">hisF</name>
    <name type="ordered locus">BPUM_3122</name>
</gene>